<keyword id="KW-0614">Plasmid</keyword>
<keyword id="KW-1185">Reference proteome</keyword>
<gene>
    <name type="ordered locus">NGR_a04030</name>
    <name type="ORF">y4dN</name>
</gene>
<geneLocation type="plasmid">
    <name>sym pNGR234a</name>
</geneLocation>
<dbReference type="EMBL" id="U00090">
    <property type="protein sequence ID" value="AAB91643.1"/>
    <property type="molecule type" value="Genomic_DNA"/>
</dbReference>
<dbReference type="RefSeq" id="NP_443823.1">
    <property type="nucleotide sequence ID" value="NC_000914.2"/>
</dbReference>
<dbReference type="KEGG" id="rhi:NGR_a04030"/>
<dbReference type="HOGENOM" id="CLU_2901070_0_0_5"/>
<dbReference type="OrthoDB" id="8279762at2"/>
<dbReference type="Proteomes" id="UP000001054">
    <property type="component" value="Plasmid pNGR234a"/>
</dbReference>
<name>Y4DN_SINFN</name>
<feature type="chain" id="PRO_0000200822" description="Uncharacterized protein y4dN">
    <location>
        <begin position="1"/>
        <end position="62"/>
    </location>
</feature>
<proteinExistence type="predicted"/>
<accession>P55413</accession>
<reference key="1">
    <citation type="journal article" date="1997" name="Nature">
        <title>Molecular basis of symbiosis between Rhizobium and legumes.</title>
        <authorList>
            <person name="Freiberg C.A."/>
            <person name="Fellay R."/>
            <person name="Bairoch A."/>
            <person name="Broughton W.J."/>
            <person name="Rosenthal A."/>
            <person name="Perret X."/>
        </authorList>
    </citation>
    <scope>NUCLEOTIDE SEQUENCE [LARGE SCALE GENOMIC DNA]</scope>
    <source>
        <strain>NBRC 101917 / NGR234</strain>
    </source>
</reference>
<reference key="2">
    <citation type="journal article" date="2009" name="Appl. Environ. Microbiol.">
        <title>Rhizobium sp. strain NGR234 possesses a remarkable number of secretion systems.</title>
        <authorList>
            <person name="Schmeisser C."/>
            <person name="Liesegang H."/>
            <person name="Krysciak D."/>
            <person name="Bakkou N."/>
            <person name="Le Quere A."/>
            <person name="Wollherr A."/>
            <person name="Heinemeyer I."/>
            <person name="Morgenstern B."/>
            <person name="Pommerening-Roeser A."/>
            <person name="Flores M."/>
            <person name="Palacios R."/>
            <person name="Brenner S."/>
            <person name="Gottschalk G."/>
            <person name="Schmitz R.A."/>
            <person name="Broughton W.J."/>
            <person name="Perret X."/>
            <person name="Strittmatter A.W."/>
            <person name="Streit W.R."/>
        </authorList>
    </citation>
    <scope>NUCLEOTIDE SEQUENCE [LARGE SCALE GENOMIC DNA]</scope>
    <source>
        <strain>NBRC 101917 / NGR234</strain>
    </source>
</reference>
<sequence length="62" mass="7001">MERKRLDAEDLVARITWQALSKCLVGEMYVNAARETFFRTAKNKGLLAEPEMSLSSVGRLAK</sequence>
<organism>
    <name type="scientific">Sinorhizobium fredii (strain NBRC 101917 / NGR234)</name>
    <dbReference type="NCBI Taxonomy" id="394"/>
    <lineage>
        <taxon>Bacteria</taxon>
        <taxon>Pseudomonadati</taxon>
        <taxon>Pseudomonadota</taxon>
        <taxon>Alphaproteobacteria</taxon>
        <taxon>Hyphomicrobiales</taxon>
        <taxon>Rhizobiaceae</taxon>
        <taxon>Sinorhizobium/Ensifer group</taxon>
        <taxon>Sinorhizobium</taxon>
    </lineage>
</organism>
<protein>
    <recommendedName>
        <fullName>Uncharacterized protein y4dN</fullName>
    </recommendedName>
</protein>